<gene>
    <name evidence="1" type="primary">betA</name>
    <name type="ordered locus">BR0553</name>
    <name type="ordered locus">BS1330_I0549</name>
</gene>
<dbReference type="EC" id="1.1.99.1" evidence="1"/>
<dbReference type="EC" id="1.2.1.8" evidence="1"/>
<dbReference type="EMBL" id="AE014291">
    <property type="protein sequence ID" value="AAN29484.1"/>
    <property type="molecule type" value="Genomic_DNA"/>
</dbReference>
<dbReference type="EMBL" id="CP002997">
    <property type="protein sequence ID" value="AEM17901.1"/>
    <property type="molecule type" value="Genomic_DNA"/>
</dbReference>
<dbReference type="RefSeq" id="WP_006189968.1">
    <property type="nucleotide sequence ID" value="NZ_KN046804.1"/>
</dbReference>
<dbReference type="SMR" id="Q8G1Z8"/>
<dbReference type="GeneID" id="45051645"/>
<dbReference type="KEGG" id="bms:BR0553"/>
<dbReference type="KEGG" id="bsi:BS1330_I0549"/>
<dbReference type="PATRIC" id="fig|204722.21.peg.2832"/>
<dbReference type="HOGENOM" id="CLU_002865_7_1_5"/>
<dbReference type="PhylomeDB" id="Q8G1Z8"/>
<dbReference type="UniPathway" id="UPA00529">
    <property type="reaction ID" value="UER00385"/>
</dbReference>
<dbReference type="Proteomes" id="UP000007104">
    <property type="component" value="Chromosome I"/>
</dbReference>
<dbReference type="GO" id="GO:0008802">
    <property type="term" value="F:betaine-aldehyde dehydrogenase (NAD+) activity"/>
    <property type="evidence" value="ECO:0007669"/>
    <property type="project" value="UniProtKB-EC"/>
</dbReference>
<dbReference type="GO" id="GO:0008812">
    <property type="term" value="F:choline dehydrogenase activity"/>
    <property type="evidence" value="ECO:0007669"/>
    <property type="project" value="UniProtKB-UniRule"/>
</dbReference>
<dbReference type="GO" id="GO:0050660">
    <property type="term" value="F:flavin adenine dinucleotide binding"/>
    <property type="evidence" value="ECO:0007669"/>
    <property type="project" value="InterPro"/>
</dbReference>
<dbReference type="GO" id="GO:0019285">
    <property type="term" value="P:glycine betaine biosynthetic process from choline"/>
    <property type="evidence" value="ECO:0007669"/>
    <property type="project" value="UniProtKB-UniRule"/>
</dbReference>
<dbReference type="Gene3D" id="3.50.50.60">
    <property type="entry name" value="FAD/NAD(P)-binding domain"/>
    <property type="match status" value="1"/>
</dbReference>
<dbReference type="Gene3D" id="3.30.560.10">
    <property type="entry name" value="Glucose Oxidase, domain 3"/>
    <property type="match status" value="1"/>
</dbReference>
<dbReference type="HAMAP" id="MF_00750">
    <property type="entry name" value="Choline_dehydrogen"/>
    <property type="match status" value="1"/>
</dbReference>
<dbReference type="InterPro" id="IPR011533">
    <property type="entry name" value="BetA"/>
</dbReference>
<dbReference type="InterPro" id="IPR036188">
    <property type="entry name" value="FAD/NAD-bd_sf"/>
</dbReference>
<dbReference type="InterPro" id="IPR012132">
    <property type="entry name" value="GMC_OxRdtase"/>
</dbReference>
<dbReference type="InterPro" id="IPR000172">
    <property type="entry name" value="GMC_OxRdtase_N"/>
</dbReference>
<dbReference type="InterPro" id="IPR007867">
    <property type="entry name" value="GMC_OxRtase_C"/>
</dbReference>
<dbReference type="NCBIfam" id="TIGR01810">
    <property type="entry name" value="betA"/>
    <property type="match status" value="1"/>
</dbReference>
<dbReference type="NCBIfam" id="NF002550">
    <property type="entry name" value="PRK02106.1"/>
    <property type="match status" value="1"/>
</dbReference>
<dbReference type="PANTHER" id="PTHR11552:SF147">
    <property type="entry name" value="CHOLINE DEHYDROGENASE, MITOCHONDRIAL"/>
    <property type="match status" value="1"/>
</dbReference>
<dbReference type="PANTHER" id="PTHR11552">
    <property type="entry name" value="GLUCOSE-METHANOL-CHOLINE GMC OXIDOREDUCTASE"/>
    <property type="match status" value="1"/>
</dbReference>
<dbReference type="Pfam" id="PF05199">
    <property type="entry name" value="GMC_oxred_C"/>
    <property type="match status" value="1"/>
</dbReference>
<dbReference type="Pfam" id="PF00732">
    <property type="entry name" value="GMC_oxred_N"/>
    <property type="match status" value="1"/>
</dbReference>
<dbReference type="PIRSF" id="PIRSF000137">
    <property type="entry name" value="Alcohol_oxidase"/>
    <property type="match status" value="1"/>
</dbReference>
<dbReference type="SUPFAM" id="SSF54373">
    <property type="entry name" value="FAD-linked reductases, C-terminal domain"/>
    <property type="match status" value="1"/>
</dbReference>
<dbReference type="SUPFAM" id="SSF51905">
    <property type="entry name" value="FAD/NAD(P)-binding domain"/>
    <property type="match status" value="1"/>
</dbReference>
<dbReference type="PROSITE" id="PS00623">
    <property type="entry name" value="GMC_OXRED_1"/>
    <property type="match status" value="1"/>
</dbReference>
<dbReference type="PROSITE" id="PS00624">
    <property type="entry name" value="GMC_OXRED_2"/>
    <property type="match status" value="1"/>
</dbReference>
<organism>
    <name type="scientific">Brucella suis biovar 1 (strain 1330)</name>
    <dbReference type="NCBI Taxonomy" id="204722"/>
    <lineage>
        <taxon>Bacteria</taxon>
        <taxon>Pseudomonadati</taxon>
        <taxon>Pseudomonadota</taxon>
        <taxon>Alphaproteobacteria</taxon>
        <taxon>Hyphomicrobiales</taxon>
        <taxon>Brucellaceae</taxon>
        <taxon>Brucella/Ochrobactrum group</taxon>
        <taxon>Brucella</taxon>
    </lineage>
</organism>
<keyword id="KW-0274">FAD</keyword>
<keyword id="KW-0285">Flavoprotein</keyword>
<keyword id="KW-0520">NAD</keyword>
<keyword id="KW-0560">Oxidoreductase</keyword>
<name>BETA_BRUSU</name>
<reference key="1">
    <citation type="journal article" date="2002" name="Proc. Natl. Acad. Sci. U.S.A.">
        <title>The Brucella suis genome reveals fundamental similarities between animal and plant pathogens and symbionts.</title>
        <authorList>
            <person name="Paulsen I.T."/>
            <person name="Seshadri R."/>
            <person name="Nelson K.E."/>
            <person name="Eisen J.A."/>
            <person name="Heidelberg J.F."/>
            <person name="Read T.D."/>
            <person name="Dodson R.J."/>
            <person name="Umayam L.A."/>
            <person name="Brinkac L.M."/>
            <person name="Beanan M.J."/>
            <person name="Daugherty S.C."/>
            <person name="DeBoy R.T."/>
            <person name="Durkin A.S."/>
            <person name="Kolonay J.F."/>
            <person name="Madupu R."/>
            <person name="Nelson W.C."/>
            <person name="Ayodeji B."/>
            <person name="Kraul M."/>
            <person name="Shetty J."/>
            <person name="Malek J.A."/>
            <person name="Van Aken S.E."/>
            <person name="Riedmuller S."/>
            <person name="Tettelin H."/>
            <person name="Gill S.R."/>
            <person name="White O."/>
            <person name="Salzberg S.L."/>
            <person name="Hoover D.L."/>
            <person name="Lindler L.E."/>
            <person name="Halling S.M."/>
            <person name="Boyle S.M."/>
            <person name="Fraser C.M."/>
        </authorList>
    </citation>
    <scope>NUCLEOTIDE SEQUENCE [LARGE SCALE GENOMIC DNA]</scope>
    <source>
        <strain>1330</strain>
    </source>
</reference>
<reference key="2">
    <citation type="journal article" date="2011" name="J. Bacteriol.">
        <title>Revised genome sequence of Brucella suis 1330.</title>
        <authorList>
            <person name="Tae H."/>
            <person name="Shallom S."/>
            <person name="Settlage R."/>
            <person name="Preston D."/>
            <person name="Adams L.G."/>
            <person name="Garner H.R."/>
        </authorList>
    </citation>
    <scope>NUCLEOTIDE SEQUENCE [LARGE SCALE GENOMIC DNA]</scope>
    <source>
        <strain>1330</strain>
    </source>
</reference>
<comment type="function">
    <text evidence="1">Involved in the biosynthesis of the osmoprotectant glycine betaine. Catalyzes the oxidation of choline to betaine aldehyde and betaine aldehyde to glycine betaine at the same rate.</text>
</comment>
<comment type="catalytic activity">
    <reaction evidence="1">
        <text>choline + A = betaine aldehyde + AH2</text>
        <dbReference type="Rhea" id="RHEA:17433"/>
        <dbReference type="ChEBI" id="CHEBI:13193"/>
        <dbReference type="ChEBI" id="CHEBI:15354"/>
        <dbReference type="ChEBI" id="CHEBI:15710"/>
        <dbReference type="ChEBI" id="CHEBI:17499"/>
        <dbReference type="EC" id="1.1.99.1"/>
    </reaction>
</comment>
<comment type="catalytic activity">
    <reaction evidence="1">
        <text>betaine aldehyde + NAD(+) + H2O = glycine betaine + NADH + 2 H(+)</text>
        <dbReference type="Rhea" id="RHEA:15305"/>
        <dbReference type="ChEBI" id="CHEBI:15377"/>
        <dbReference type="ChEBI" id="CHEBI:15378"/>
        <dbReference type="ChEBI" id="CHEBI:15710"/>
        <dbReference type="ChEBI" id="CHEBI:17750"/>
        <dbReference type="ChEBI" id="CHEBI:57540"/>
        <dbReference type="ChEBI" id="CHEBI:57945"/>
        <dbReference type="EC" id="1.2.1.8"/>
    </reaction>
</comment>
<comment type="cofactor">
    <cofactor evidence="1">
        <name>FAD</name>
        <dbReference type="ChEBI" id="CHEBI:57692"/>
    </cofactor>
</comment>
<comment type="pathway">
    <text evidence="1">Amine and polyamine biosynthesis; betaine biosynthesis via choline pathway; betaine aldehyde from choline (cytochrome c reductase route): step 1/1.</text>
</comment>
<comment type="similarity">
    <text evidence="1">Belongs to the GMC oxidoreductase family.</text>
</comment>
<sequence length="549" mass="60623">MEADFVIIGSGSAGSAMAYRLSENGRYSVIVIEYGVPDVGPLIQMPAALSFPMNMETYDWGFSSEPEPHIGGRSLVTPRGKVLGGSSSINGMVYVRGHACDFDHWSQSGARGWAYADVLPYFKRMENSQGGQEGWRGTNGPLYVQRGKRDNPLFHAFVEAGHQAGFEVTDDYNGEKQEGFGPMEQTIHNGRRWSAANAYLKPALKRPNVKLVKGFARKIVLEGKRAVGVEIEAGRTFSTIRARREVIIAASSINSPKLLMLSGIGPAAHLKEHGIDLVADRPGVGQNLQDHLEVYIQQECTQPITLYSELNLFSKARIGVEWLLFKTGDGATNHFESAAFVRSKAGVEYPDIQYHFLPVAIRYDGKAAAQSHGFQAHVGPMRSKSRGSVTLRSANPREKPVIKFNYMSHEDDWADFRHCVRLTREIFGQAAFDPYRGAEIQPGAHVQTDDEIDNFIREHVESAFHPCGTCKMGAVDDPMAVVDPECRVIGVEGLRVADSSIFPRITNGNLNGPSIMVGEKASDHILGRTPLARSNQEPWINPRWQVSDR</sequence>
<accession>Q8G1Z8</accession>
<accession>G0K7H3</accession>
<feature type="chain" id="PRO_0000205585" description="Oxygen-dependent choline dehydrogenase">
    <location>
        <begin position="1"/>
        <end position="549"/>
    </location>
</feature>
<feature type="active site" description="Proton acceptor" evidence="1">
    <location>
        <position position="465"/>
    </location>
</feature>
<feature type="binding site" evidence="1">
    <location>
        <begin position="4"/>
        <end position="33"/>
    </location>
    <ligand>
        <name>FAD</name>
        <dbReference type="ChEBI" id="CHEBI:57692"/>
    </ligand>
</feature>
<protein>
    <recommendedName>
        <fullName evidence="1">Oxygen-dependent choline dehydrogenase</fullName>
        <shortName evidence="1">CDH</shortName>
        <shortName evidence="1">CHD</shortName>
        <ecNumber evidence="1">1.1.99.1</ecNumber>
    </recommendedName>
    <alternativeName>
        <fullName evidence="1">Betaine aldehyde dehydrogenase</fullName>
        <shortName evidence="1">BADH</shortName>
        <ecNumber evidence="1">1.2.1.8</ecNumber>
    </alternativeName>
</protein>
<proteinExistence type="inferred from homology"/>
<evidence type="ECO:0000255" key="1">
    <source>
        <dbReference type="HAMAP-Rule" id="MF_00750"/>
    </source>
</evidence>